<feature type="chain" id="PRO_0000369287" description="Cytoplasmic tRNA 2-thiolation protein 2">
    <location>
        <begin position="1"/>
        <end position="374"/>
    </location>
</feature>
<sequence>MPGKELTDPCVDCADAEAILTVRCRRLCQDCYARFVNFKVFKRMENYRLRRNMSRTGPCKLLLPLSYGTSSSVLLHILNAQIQHERAKSHPSPGFELHVLVIEPSTVSTSSPPHDEGFDLLQQTFPSHSFTRVSLHNVFELDPSIQDVLSQFSSEGFTDDATMSDKDRLDAFRASITTATSRVDVDYILITRLVVAFAKKIECRGVVWGDSDTRLAAKTLANVAKGRGSAITWQVCDGMSPFGLEFSFPLRDLYKAEVQNYASFFPELAKIIIPDEPPSENILTKNLSIDELMMRYVQTQGEKYPGIMANVTRTASKLQASLVPANVPRCSFCGGSMLNQDGQIIMGGAAGNSEVRQGAELCYACTRSRPEVSY</sequence>
<reference key="1">
    <citation type="journal article" date="2008" name="PLoS Genet.">
        <title>Genomic islands in the pathogenic filamentous fungus Aspergillus fumigatus.</title>
        <authorList>
            <person name="Fedorova N.D."/>
            <person name="Khaldi N."/>
            <person name="Joardar V.S."/>
            <person name="Maiti R."/>
            <person name="Amedeo P."/>
            <person name="Anderson M.J."/>
            <person name="Crabtree J."/>
            <person name="Silva J.C."/>
            <person name="Badger J.H."/>
            <person name="Albarraq A."/>
            <person name="Angiuoli S."/>
            <person name="Bussey H."/>
            <person name="Bowyer P."/>
            <person name="Cotty P.J."/>
            <person name="Dyer P.S."/>
            <person name="Egan A."/>
            <person name="Galens K."/>
            <person name="Fraser-Liggett C.M."/>
            <person name="Haas B.J."/>
            <person name="Inman J.M."/>
            <person name="Kent R."/>
            <person name="Lemieux S."/>
            <person name="Malavazi I."/>
            <person name="Orvis J."/>
            <person name="Roemer T."/>
            <person name="Ronning C.M."/>
            <person name="Sundaram J.P."/>
            <person name="Sutton G."/>
            <person name="Turner G."/>
            <person name="Venter J.C."/>
            <person name="White O.R."/>
            <person name="Whitty B.R."/>
            <person name="Youngman P."/>
            <person name="Wolfe K.H."/>
            <person name="Goldman G.H."/>
            <person name="Wortman J.R."/>
            <person name="Jiang B."/>
            <person name="Denning D.W."/>
            <person name="Nierman W.C."/>
        </authorList>
    </citation>
    <scope>NUCLEOTIDE SEQUENCE [LARGE SCALE GENOMIC DNA]</scope>
    <source>
        <strain>ATCC 1007 / CBS 513.65 / DSM 816 / NCTC 3887 / NRRL 1 / QM 1276 / 107</strain>
    </source>
</reference>
<name>CTU2_ASPCL</name>
<evidence type="ECO:0000255" key="1">
    <source>
        <dbReference type="HAMAP-Rule" id="MF_03054"/>
    </source>
</evidence>
<protein>
    <recommendedName>
        <fullName evidence="1">Cytoplasmic tRNA 2-thiolation protein 2</fullName>
    </recommendedName>
</protein>
<dbReference type="EMBL" id="DS027049">
    <property type="protein sequence ID" value="EAW13104.1"/>
    <property type="molecule type" value="Genomic_DNA"/>
</dbReference>
<dbReference type="RefSeq" id="XP_001274530.1">
    <property type="nucleotide sequence ID" value="XM_001274529.1"/>
</dbReference>
<dbReference type="STRING" id="344612.A1CBI6"/>
<dbReference type="EnsemblFungi" id="EAW13104">
    <property type="protein sequence ID" value="EAW13104"/>
    <property type="gene ID" value="ACLA_015460"/>
</dbReference>
<dbReference type="GeneID" id="4706433"/>
<dbReference type="KEGG" id="act:ACLA_015460"/>
<dbReference type="VEuPathDB" id="FungiDB:ACLA_015460"/>
<dbReference type="eggNOG" id="KOG2594">
    <property type="taxonomic scope" value="Eukaryota"/>
</dbReference>
<dbReference type="HOGENOM" id="CLU_024534_3_0_1"/>
<dbReference type="OMA" id="KQRKQMM"/>
<dbReference type="OrthoDB" id="25129at2759"/>
<dbReference type="UniPathway" id="UPA00988"/>
<dbReference type="Proteomes" id="UP000006701">
    <property type="component" value="Unassembled WGS sequence"/>
</dbReference>
<dbReference type="GO" id="GO:0005829">
    <property type="term" value="C:cytosol"/>
    <property type="evidence" value="ECO:0000250"/>
    <property type="project" value="UniProtKB"/>
</dbReference>
<dbReference type="GO" id="GO:0016779">
    <property type="term" value="F:nucleotidyltransferase activity"/>
    <property type="evidence" value="ECO:0007669"/>
    <property type="project" value="UniProtKB-UniRule"/>
</dbReference>
<dbReference type="GO" id="GO:0016783">
    <property type="term" value="F:sulfurtransferase activity"/>
    <property type="evidence" value="ECO:0007669"/>
    <property type="project" value="TreeGrafter"/>
</dbReference>
<dbReference type="GO" id="GO:0000049">
    <property type="term" value="F:tRNA binding"/>
    <property type="evidence" value="ECO:0007669"/>
    <property type="project" value="InterPro"/>
</dbReference>
<dbReference type="GO" id="GO:0032447">
    <property type="term" value="P:protein urmylation"/>
    <property type="evidence" value="ECO:0007669"/>
    <property type="project" value="UniProtKB-UniRule"/>
</dbReference>
<dbReference type="GO" id="GO:0034227">
    <property type="term" value="P:tRNA thio-modification"/>
    <property type="evidence" value="ECO:0000250"/>
    <property type="project" value="UniProtKB"/>
</dbReference>
<dbReference type="GO" id="GO:0002143">
    <property type="term" value="P:tRNA wobble position uridine thiolation"/>
    <property type="evidence" value="ECO:0007669"/>
    <property type="project" value="TreeGrafter"/>
</dbReference>
<dbReference type="GO" id="GO:0002098">
    <property type="term" value="P:tRNA wobble uridine modification"/>
    <property type="evidence" value="ECO:0000250"/>
    <property type="project" value="UniProtKB"/>
</dbReference>
<dbReference type="FunFam" id="3.40.50.620:FF:000143">
    <property type="entry name" value="Cytoplasmic tRNA 2-thiolation protein 2"/>
    <property type="match status" value="1"/>
</dbReference>
<dbReference type="Gene3D" id="3.40.50.620">
    <property type="entry name" value="HUPs"/>
    <property type="match status" value="1"/>
</dbReference>
<dbReference type="HAMAP" id="MF_03054">
    <property type="entry name" value="CTU2"/>
    <property type="match status" value="1"/>
</dbReference>
<dbReference type="InterPro" id="IPR019407">
    <property type="entry name" value="CTU2"/>
</dbReference>
<dbReference type="InterPro" id="IPR014729">
    <property type="entry name" value="Rossmann-like_a/b/a_fold"/>
</dbReference>
<dbReference type="PANTHER" id="PTHR20882">
    <property type="entry name" value="CYTOPLASMIC TRNA 2-THIOLATION PROTEIN 2"/>
    <property type="match status" value="1"/>
</dbReference>
<dbReference type="PANTHER" id="PTHR20882:SF14">
    <property type="entry name" value="CYTOPLASMIC TRNA 2-THIOLATION PROTEIN 2"/>
    <property type="match status" value="1"/>
</dbReference>
<dbReference type="Pfam" id="PF10288">
    <property type="entry name" value="CTU2"/>
    <property type="match status" value="1"/>
</dbReference>
<dbReference type="SUPFAM" id="SSF52402">
    <property type="entry name" value="Adenine nucleotide alpha hydrolases-like"/>
    <property type="match status" value="1"/>
</dbReference>
<comment type="function">
    <text evidence="1">Plays a central role in 2-thiolation of mcm(5)S(2)U at tRNA wobble positions of tRNA(Lys), tRNA(Glu) and tRNA(Gln). May act by forming a heterodimer with ncs6 that ligates sulfur from thiocarboxylated urm1 onto the uridine of tRNAs at wobble position. Prior mcm(5) tRNA modification by the elongator complex is required for 2-thiolation. May also be involved in protein urmylation.</text>
</comment>
<comment type="pathway">
    <text evidence="1">tRNA modification; 5-methoxycarbonylmethyl-2-thiouridine-tRNA biosynthesis.</text>
</comment>
<comment type="subcellular location">
    <subcellularLocation>
        <location evidence="1">Cytoplasm</location>
    </subcellularLocation>
</comment>
<comment type="similarity">
    <text evidence="1">Belongs to the CTU2/NCS2 family.</text>
</comment>
<gene>
    <name type="primary">ncs2</name>
    <name type="synonym">ctu2</name>
    <name type="ORF">ACLA_015460</name>
</gene>
<accession>A1CBI6</accession>
<keyword id="KW-0963">Cytoplasm</keyword>
<keyword id="KW-1185">Reference proteome</keyword>
<keyword id="KW-0819">tRNA processing</keyword>
<organism>
    <name type="scientific">Aspergillus clavatus (strain ATCC 1007 / CBS 513.65 / DSM 816 / NCTC 3887 / NRRL 1 / QM 1276 / 107)</name>
    <dbReference type="NCBI Taxonomy" id="344612"/>
    <lineage>
        <taxon>Eukaryota</taxon>
        <taxon>Fungi</taxon>
        <taxon>Dikarya</taxon>
        <taxon>Ascomycota</taxon>
        <taxon>Pezizomycotina</taxon>
        <taxon>Eurotiomycetes</taxon>
        <taxon>Eurotiomycetidae</taxon>
        <taxon>Eurotiales</taxon>
        <taxon>Aspergillaceae</taxon>
        <taxon>Aspergillus</taxon>
        <taxon>Aspergillus subgen. Fumigati</taxon>
    </lineage>
</organism>
<proteinExistence type="inferred from homology"/>